<dbReference type="EC" id="5.6.2.4"/>
<dbReference type="EMBL" id="AL583917">
    <property type="protein sequence ID" value="CAC29661.1"/>
    <property type="molecule type" value="Genomic_DNA"/>
</dbReference>
<dbReference type="PIR" id="A86928">
    <property type="entry name" value="A86928"/>
</dbReference>
<dbReference type="RefSeq" id="NP_301239.1">
    <property type="nucleotide sequence ID" value="NC_002677.1"/>
</dbReference>
<dbReference type="RefSeq" id="WP_010907564.1">
    <property type="nucleotide sequence ID" value="NC_002677.1"/>
</dbReference>
<dbReference type="SMR" id="Q9CD72"/>
<dbReference type="STRING" id="272631.gene:17573968"/>
<dbReference type="KEGG" id="mle:ML0153"/>
<dbReference type="PATRIC" id="fig|272631.5.peg.237"/>
<dbReference type="Leproma" id="ML0153"/>
<dbReference type="eggNOG" id="COG0210">
    <property type="taxonomic scope" value="Bacteria"/>
</dbReference>
<dbReference type="HOGENOM" id="CLU_004585_5_2_11"/>
<dbReference type="OrthoDB" id="9806690at2"/>
<dbReference type="Proteomes" id="UP000000806">
    <property type="component" value="Chromosome"/>
</dbReference>
<dbReference type="GO" id="GO:0005829">
    <property type="term" value="C:cytosol"/>
    <property type="evidence" value="ECO:0007669"/>
    <property type="project" value="TreeGrafter"/>
</dbReference>
<dbReference type="GO" id="GO:0033202">
    <property type="term" value="C:DNA helicase complex"/>
    <property type="evidence" value="ECO:0007669"/>
    <property type="project" value="TreeGrafter"/>
</dbReference>
<dbReference type="GO" id="GO:0043138">
    <property type="term" value="F:3'-5' DNA helicase activity"/>
    <property type="evidence" value="ECO:0007669"/>
    <property type="project" value="TreeGrafter"/>
</dbReference>
<dbReference type="GO" id="GO:0005524">
    <property type="term" value="F:ATP binding"/>
    <property type="evidence" value="ECO:0007669"/>
    <property type="project" value="UniProtKB-KW"/>
</dbReference>
<dbReference type="GO" id="GO:0016887">
    <property type="term" value="F:ATP hydrolysis activity"/>
    <property type="evidence" value="ECO:0007669"/>
    <property type="project" value="RHEA"/>
</dbReference>
<dbReference type="GO" id="GO:0003677">
    <property type="term" value="F:DNA binding"/>
    <property type="evidence" value="ECO:0007669"/>
    <property type="project" value="UniProtKB-KW"/>
</dbReference>
<dbReference type="GO" id="GO:0000725">
    <property type="term" value="P:recombinational repair"/>
    <property type="evidence" value="ECO:0007669"/>
    <property type="project" value="TreeGrafter"/>
</dbReference>
<dbReference type="CDD" id="cd17932">
    <property type="entry name" value="DEXQc_UvrD"/>
    <property type="match status" value="1"/>
</dbReference>
<dbReference type="CDD" id="cd18807">
    <property type="entry name" value="SF1_C_UvrD"/>
    <property type="match status" value="2"/>
</dbReference>
<dbReference type="FunFam" id="1.10.10.160:FF:000001">
    <property type="entry name" value="ATP-dependent DNA helicase"/>
    <property type="match status" value="1"/>
</dbReference>
<dbReference type="FunFam" id="1.10.486.10:FF:000003">
    <property type="entry name" value="ATP-dependent DNA helicase"/>
    <property type="match status" value="1"/>
</dbReference>
<dbReference type="Gene3D" id="1.10.10.160">
    <property type="match status" value="1"/>
</dbReference>
<dbReference type="Gene3D" id="3.40.50.300">
    <property type="entry name" value="P-loop containing nucleotide triphosphate hydrolases"/>
    <property type="match status" value="2"/>
</dbReference>
<dbReference type="Gene3D" id="1.10.486.10">
    <property type="entry name" value="PCRA, domain 4"/>
    <property type="match status" value="1"/>
</dbReference>
<dbReference type="InterPro" id="IPR013986">
    <property type="entry name" value="DExx_box_DNA_helicase_dom_sf"/>
</dbReference>
<dbReference type="InterPro" id="IPR014017">
    <property type="entry name" value="DNA_helicase_UvrD-like_C"/>
</dbReference>
<dbReference type="InterPro" id="IPR000212">
    <property type="entry name" value="DNA_helicase_UvrD/REP"/>
</dbReference>
<dbReference type="InterPro" id="IPR027417">
    <property type="entry name" value="P-loop_NTPase"/>
</dbReference>
<dbReference type="InterPro" id="IPR014016">
    <property type="entry name" value="UvrD-like_ATP-bd"/>
</dbReference>
<dbReference type="PANTHER" id="PTHR11070:SF2">
    <property type="entry name" value="ATP-DEPENDENT DNA HELICASE SRS2"/>
    <property type="match status" value="1"/>
</dbReference>
<dbReference type="PANTHER" id="PTHR11070">
    <property type="entry name" value="UVRD / RECB / PCRA DNA HELICASE FAMILY MEMBER"/>
    <property type="match status" value="1"/>
</dbReference>
<dbReference type="Pfam" id="PF21196">
    <property type="entry name" value="PcrA_UvrD_tudor"/>
    <property type="match status" value="1"/>
</dbReference>
<dbReference type="Pfam" id="PF00580">
    <property type="entry name" value="UvrD-helicase"/>
    <property type="match status" value="1"/>
</dbReference>
<dbReference type="Pfam" id="PF13361">
    <property type="entry name" value="UvrD_C"/>
    <property type="match status" value="1"/>
</dbReference>
<dbReference type="SUPFAM" id="SSF52540">
    <property type="entry name" value="P-loop containing nucleoside triphosphate hydrolases"/>
    <property type="match status" value="1"/>
</dbReference>
<dbReference type="PROSITE" id="PS51198">
    <property type="entry name" value="UVRD_HELICASE_ATP_BIND"/>
    <property type="match status" value="1"/>
</dbReference>
<dbReference type="PROSITE" id="PS51217">
    <property type="entry name" value="UVRD_HELICASE_CTER"/>
    <property type="match status" value="1"/>
</dbReference>
<proteinExistence type="inferred from homology"/>
<reference key="1">
    <citation type="journal article" date="2001" name="Nature">
        <title>Massive gene decay in the leprosy bacillus.</title>
        <authorList>
            <person name="Cole S.T."/>
            <person name="Eiglmeier K."/>
            <person name="Parkhill J."/>
            <person name="James K.D."/>
            <person name="Thomson N.R."/>
            <person name="Wheeler P.R."/>
            <person name="Honore N."/>
            <person name="Garnier T."/>
            <person name="Churcher C.M."/>
            <person name="Harris D.E."/>
            <person name="Mungall K.L."/>
            <person name="Basham D."/>
            <person name="Brown D."/>
            <person name="Chillingworth T."/>
            <person name="Connor R."/>
            <person name="Davies R.M."/>
            <person name="Devlin K."/>
            <person name="Duthoy S."/>
            <person name="Feltwell T."/>
            <person name="Fraser A."/>
            <person name="Hamlin N."/>
            <person name="Holroyd S."/>
            <person name="Hornsby T."/>
            <person name="Jagels K."/>
            <person name="Lacroix C."/>
            <person name="Maclean J."/>
            <person name="Moule S."/>
            <person name="Murphy L.D."/>
            <person name="Oliver K."/>
            <person name="Quail M.A."/>
            <person name="Rajandream M.A."/>
            <person name="Rutherford K.M."/>
            <person name="Rutter S."/>
            <person name="Seeger K."/>
            <person name="Simon S."/>
            <person name="Simmonds M."/>
            <person name="Skelton J."/>
            <person name="Squares R."/>
            <person name="Squares S."/>
            <person name="Stevens K."/>
            <person name="Taylor K."/>
            <person name="Whitehead S."/>
            <person name="Woodward J.R."/>
            <person name="Barrell B.G."/>
        </authorList>
    </citation>
    <scope>NUCLEOTIDE SEQUENCE [LARGE SCALE GENOMIC DNA]</scope>
    <source>
        <strain>TN</strain>
    </source>
</reference>
<sequence>MSVHTTDAKPDSEVDRLLDGLNPQQRQAVVHEGSPLLIVAGAGSGKTTVLARRIAYLIAARSVGVSQILAITFTNKAAAEMRERVARLVGDHTGPSMWVSTFHSTCVRILRNQASLIGGLNSNFSIYDVDDSRSLLQMIGQDMGLDIKRYSPRLMANAISNLKNELIDAESAVANLSSDTDDLARTVATVYGEYQRRLRTANALDFDDLIGETVGILQAFPQIAEHYRRRFRHVLVDEYQDTNHAQYVLVRELVGHGARNSPDDMPPGELCVVGDADQSIYAFRGSTISNIEDFERDYPDTTTILLEQNYRSTQNILSAANSVIARNFGRRDKRLWTDAGKGELIVGYVSDNEHDEAKFIADEIDALVGGGEITYDDVAVLYRANNLSRSLEEVFIPTGIPYKVVGGFCFYESKEIRDLIAYLRVLDNPGDAVSMRRILNTPRRGIGDRAEACVSVYAENTGTSFADALQAVAEGKVPMLNTRSVKAIAGFVALLDDLRCRVDDDLGELVESVLERSGYLRELESSTDPQELARLDNLNELVSFAHEFSTEQANAAALAKSLHTPEDEDVPDTGALAAFLEKVSLMSDTDQIPENNSGVVTLMTLHAAKGLEFPVVFVTGWEDGMLPHMRTLGDPTELSEERRLAYVGITRARQRLYLSRAITRSSWGQPILNPESRFLREIPPELIDWRRSILTDSYSTPASGASRFGRVRPSSIRSGASKRALLVLAPGDRVTHDKYGLGRVEEVSGVGESAISLIDFGSSGRIKLMHNHAPVTKL</sequence>
<organism>
    <name type="scientific">Mycobacterium leprae (strain TN)</name>
    <dbReference type="NCBI Taxonomy" id="272631"/>
    <lineage>
        <taxon>Bacteria</taxon>
        <taxon>Bacillati</taxon>
        <taxon>Actinomycetota</taxon>
        <taxon>Actinomycetes</taxon>
        <taxon>Mycobacteriales</taxon>
        <taxon>Mycobacteriaceae</taxon>
        <taxon>Mycobacterium</taxon>
    </lineage>
</organism>
<keyword id="KW-0067">ATP-binding</keyword>
<keyword id="KW-0227">DNA damage</keyword>
<keyword id="KW-0234">DNA repair</keyword>
<keyword id="KW-0238">DNA-binding</keyword>
<keyword id="KW-0347">Helicase</keyword>
<keyword id="KW-0378">Hydrolase</keyword>
<keyword id="KW-0413">Isomerase</keyword>
<keyword id="KW-0547">Nucleotide-binding</keyword>
<keyword id="KW-1185">Reference proteome</keyword>
<comment type="function">
    <text evidence="1">DNA-dependent ATPase, acting on dsDNA with a 3'-ssDNA tail, unwinding with 3'-to 5'-polarity. Also highly efficient on nicked DNA. Involved in the post-incision events of nucleotide excision repair (By similarity).</text>
</comment>
<comment type="catalytic activity">
    <reaction>
        <text>Couples ATP hydrolysis with the unwinding of duplex DNA by translocating in the 3'-5' direction.</text>
        <dbReference type="EC" id="5.6.2.4"/>
    </reaction>
</comment>
<comment type="catalytic activity">
    <reaction>
        <text>ATP + H2O = ADP + phosphate + H(+)</text>
        <dbReference type="Rhea" id="RHEA:13065"/>
        <dbReference type="ChEBI" id="CHEBI:15377"/>
        <dbReference type="ChEBI" id="CHEBI:15378"/>
        <dbReference type="ChEBI" id="CHEBI:30616"/>
        <dbReference type="ChEBI" id="CHEBI:43474"/>
        <dbReference type="ChEBI" id="CHEBI:456216"/>
        <dbReference type="EC" id="5.6.2.4"/>
    </reaction>
</comment>
<comment type="cofactor">
    <cofactor evidence="1">
        <name>Mg(2+)</name>
        <dbReference type="ChEBI" id="CHEBI:18420"/>
    </cofactor>
</comment>
<comment type="subunit">
    <text evidence="1">Monomer.</text>
</comment>
<comment type="similarity">
    <text evidence="4">Belongs to the helicase family. UvrD subfamily.</text>
</comment>
<gene>
    <name type="primary">uvrD</name>
    <name type="ordered locus">ML0153</name>
</gene>
<protein>
    <recommendedName>
        <fullName>ATP-dependent DNA helicase UvrD1</fullName>
        <ecNumber>5.6.2.4</ecNumber>
    </recommendedName>
    <alternativeName>
        <fullName evidence="4">DNA 3'-5' helicase UvrD1</fullName>
    </alternativeName>
</protein>
<name>UVRD1_MYCLE</name>
<feature type="chain" id="PRO_0000102054" description="ATP-dependent DNA helicase UvrD1">
    <location>
        <begin position="1"/>
        <end position="778"/>
    </location>
</feature>
<feature type="domain" description="UvrD-like helicase ATP-binding" evidence="2">
    <location>
        <begin position="19"/>
        <end position="313"/>
    </location>
</feature>
<feature type="domain" description="UvrD-like helicase C-terminal" evidence="3">
    <location>
        <begin position="314"/>
        <end position="610"/>
    </location>
</feature>
<feature type="binding site" evidence="2">
    <location>
        <begin position="43"/>
        <end position="48"/>
    </location>
    <ligand>
        <name>ATP</name>
        <dbReference type="ChEBI" id="CHEBI:30616"/>
    </ligand>
</feature>
<feature type="binding site" evidence="1">
    <location>
        <position position="311"/>
    </location>
    <ligand>
        <name>ATP</name>
        <dbReference type="ChEBI" id="CHEBI:30616"/>
    </ligand>
</feature>
<evidence type="ECO:0000250" key="1"/>
<evidence type="ECO:0000255" key="2">
    <source>
        <dbReference type="PROSITE-ProRule" id="PRU00560"/>
    </source>
</evidence>
<evidence type="ECO:0000255" key="3">
    <source>
        <dbReference type="PROSITE-ProRule" id="PRU00617"/>
    </source>
</evidence>
<evidence type="ECO:0000305" key="4"/>
<accession>Q9CD72</accession>